<geneLocation type="plasmid">
    <name>pDP1</name>
</geneLocation>
<reference key="1">
    <citation type="journal article" date="1999" name="Plasmid">
        <title>Characterization of cryptic plasmids pDP1 and pSMB1 of Streptococcus pneumoniae.</title>
        <authorList>
            <person name="Oggioni M.R."/>
            <person name="Iannelli F."/>
            <person name="Pozzi G."/>
        </authorList>
    </citation>
    <scope>NUCLEOTIDE SEQUENCE [LARGE SCALE GENOMIC DNA]</scope>
    <source>
        <strain>D39 / NCTC 7466</strain>
    </source>
</reference>
<protein>
    <recommendedName>
        <fullName>Uncharacterized membrane protein SPD_2304</fullName>
    </recommendedName>
</protein>
<sequence length="65" mass="7855">MNKAWLFWSVIVLYFFIKFFDKVLDIKLFGSIQIWLDNLPIPMKILLTIALVLFLFIVFPYRGKR</sequence>
<dbReference type="EMBL" id="AF047696">
    <property type="status" value="NOT_ANNOTATED_CDS"/>
    <property type="molecule type" value="Genomic_DNA"/>
</dbReference>
<dbReference type="SMR" id="P0C2H1"/>
<dbReference type="Proteomes" id="UP000001452">
    <property type="component" value="Plasmid pDP1"/>
</dbReference>
<dbReference type="GO" id="GO:0016020">
    <property type="term" value="C:membrane"/>
    <property type="evidence" value="ECO:0007669"/>
    <property type="project" value="UniProtKB-SubCell"/>
</dbReference>
<gene>
    <name type="ordered locus">SPD_2304</name>
    <name type="ORF">orf4</name>
</gene>
<keyword id="KW-0472">Membrane</keyword>
<keyword id="KW-0614">Plasmid</keyword>
<keyword id="KW-1185">Reference proteome</keyword>
<keyword id="KW-0812">Transmembrane</keyword>
<keyword id="KW-1133">Transmembrane helix</keyword>
<name>Y2304_STRP2</name>
<comment type="subcellular location">
    <subcellularLocation>
        <location evidence="2">Membrane</location>
        <topology evidence="2">Multi-pass membrane protein</topology>
    </subcellularLocation>
</comment>
<accession>P0C2H1</accession>
<proteinExistence type="predicted"/>
<evidence type="ECO:0000255" key="1"/>
<evidence type="ECO:0000305" key="2"/>
<feature type="chain" id="PRO_0000275935" description="Uncharacterized membrane protein SPD_2304">
    <location>
        <begin position="1"/>
        <end position="65"/>
    </location>
</feature>
<feature type="transmembrane region" description="Helical" evidence="1">
    <location>
        <begin position="4"/>
        <end position="24"/>
    </location>
</feature>
<feature type="transmembrane region" description="Helical" evidence="1">
    <location>
        <begin position="39"/>
        <end position="59"/>
    </location>
</feature>
<organism>
    <name type="scientific">Streptococcus pneumoniae serotype 2 (strain D39 / NCTC 7466)</name>
    <dbReference type="NCBI Taxonomy" id="373153"/>
    <lineage>
        <taxon>Bacteria</taxon>
        <taxon>Bacillati</taxon>
        <taxon>Bacillota</taxon>
        <taxon>Bacilli</taxon>
        <taxon>Lactobacillales</taxon>
        <taxon>Streptococcaceae</taxon>
        <taxon>Streptococcus</taxon>
    </lineage>
</organism>